<keyword id="KW-0030">Aminoacyl-tRNA synthetase</keyword>
<keyword id="KW-0067">ATP-binding</keyword>
<keyword id="KW-0963">Cytoplasm</keyword>
<keyword id="KW-0436">Ligase</keyword>
<keyword id="KW-0547">Nucleotide-binding</keyword>
<keyword id="KW-0648">Protein biosynthesis</keyword>
<keyword id="KW-1185">Reference proteome</keyword>
<keyword id="KW-0694">RNA-binding</keyword>
<protein>
    <recommendedName>
        <fullName evidence="1">Tyrosine--tRNA ligase</fullName>
        <ecNumber evidence="1">6.1.1.1</ecNumber>
    </recommendedName>
    <alternativeName>
        <fullName evidence="1">Tyrosyl-tRNA synthetase</fullName>
        <shortName evidence="1">TyrRS</shortName>
    </alternativeName>
</protein>
<proteinExistence type="inferred from homology"/>
<sequence length="428" mass="48662">MDILQDLESRGLIHQTTDRERLEKHLQNNQVTLYCGFDPTADSLHIGHLVPLTMLKRFQQAGHKPIALVGGGTGMIGDPSGRSSERSLNAPEVVHGFTSKLQQQIAKLVDMESNASENTVVARNNHDWLGNMTIIDFLRDAGKHFGINYMLAKESVSARIEQGITFTEFSYMILQSLDYLKLYEEENCTLQIGGSDQWGNITAGMELIRRSRENLDENIEVFGLTVPLITKADGTKFGKTAGNAIWLDASKTSPYEFYQFWFNTDDRDVIRFIRYFTFLSVEEITELEKEVETQPEKRVAQKRLAEEMTKTVHDEAALEQAKRITNALFSGDIKQLNVEEVEQAFKDVPNHIITREPVGLIDLLVDAKISSSKRQAREDVKNGAIYINGERVQDMNYHVEEKDHLGNKFTVVRRGKKKYFLIQVESIS</sequence>
<organism>
    <name type="scientific">Oceanobacillus iheyensis (strain DSM 14371 / CIP 107618 / JCM 11309 / KCTC 3954 / HTE831)</name>
    <dbReference type="NCBI Taxonomy" id="221109"/>
    <lineage>
        <taxon>Bacteria</taxon>
        <taxon>Bacillati</taxon>
        <taxon>Bacillota</taxon>
        <taxon>Bacilli</taxon>
        <taxon>Bacillales</taxon>
        <taxon>Bacillaceae</taxon>
        <taxon>Oceanobacillus</taxon>
    </lineage>
</organism>
<gene>
    <name evidence="1" type="primary">tyrS</name>
    <name type="ordered locus">OB2218</name>
</gene>
<accession>Q8CXA5</accession>
<evidence type="ECO:0000255" key="1">
    <source>
        <dbReference type="HAMAP-Rule" id="MF_02006"/>
    </source>
</evidence>
<reference key="1">
    <citation type="journal article" date="2002" name="Nucleic Acids Res.">
        <title>Genome sequence of Oceanobacillus iheyensis isolated from the Iheya Ridge and its unexpected adaptive capabilities to extreme environments.</title>
        <authorList>
            <person name="Takami H."/>
            <person name="Takaki Y."/>
            <person name="Uchiyama I."/>
        </authorList>
    </citation>
    <scope>NUCLEOTIDE SEQUENCE [LARGE SCALE GENOMIC DNA]</scope>
    <source>
        <strain>DSM 14371 / CIP 107618 / JCM 11309 / KCTC 3954 / HTE831</strain>
    </source>
</reference>
<comment type="function">
    <text evidence="1">Catalyzes the attachment of tyrosine to tRNA(Tyr) in a two-step reaction: tyrosine is first activated by ATP to form Tyr-AMP and then transferred to the acceptor end of tRNA(Tyr).</text>
</comment>
<comment type="catalytic activity">
    <reaction evidence="1">
        <text>tRNA(Tyr) + L-tyrosine + ATP = L-tyrosyl-tRNA(Tyr) + AMP + diphosphate + H(+)</text>
        <dbReference type="Rhea" id="RHEA:10220"/>
        <dbReference type="Rhea" id="RHEA-COMP:9706"/>
        <dbReference type="Rhea" id="RHEA-COMP:9707"/>
        <dbReference type="ChEBI" id="CHEBI:15378"/>
        <dbReference type="ChEBI" id="CHEBI:30616"/>
        <dbReference type="ChEBI" id="CHEBI:33019"/>
        <dbReference type="ChEBI" id="CHEBI:58315"/>
        <dbReference type="ChEBI" id="CHEBI:78442"/>
        <dbReference type="ChEBI" id="CHEBI:78536"/>
        <dbReference type="ChEBI" id="CHEBI:456215"/>
        <dbReference type="EC" id="6.1.1.1"/>
    </reaction>
</comment>
<comment type="subunit">
    <text evidence="1">Homodimer.</text>
</comment>
<comment type="subcellular location">
    <subcellularLocation>
        <location evidence="1">Cytoplasm</location>
    </subcellularLocation>
</comment>
<comment type="similarity">
    <text evidence="1">Belongs to the class-I aminoacyl-tRNA synthetase family. TyrS type 1 subfamily.</text>
</comment>
<name>SYY_OCEIH</name>
<dbReference type="EC" id="6.1.1.1" evidence="1"/>
<dbReference type="EMBL" id="BA000028">
    <property type="protein sequence ID" value="BAC14174.1"/>
    <property type="molecule type" value="Genomic_DNA"/>
</dbReference>
<dbReference type="RefSeq" id="WP_011066612.1">
    <property type="nucleotide sequence ID" value="NC_004193.1"/>
</dbReference>
<dbReference type="SMR" id="Q8CXA5"/>
<dbReference type="STRING" id="221109.gene:10734466"/>
<dbReference type="KEGG" id="oih:OB2218"/>
<dbReference type="eggNOG" id="COG0162">
    <property type="taxonomic scope" value="Bacteria"/>
</dbReference>
<dbReference type="HOGENOM" id="CLU_024003_0_3_9"/>
<dbReference type="OrthoDB" id="9804243at2"/>
<dbReference type="PhylomeDB" id="Q8CXA5"/>
<dbReference type="Proteomes" id="UP000000822">
    <property type="component" value="Chromosome"/>
</dbReference>
<dbReference type="GO" id="GO:0005829">
    <property type="term" value="C:cytosol"/>
    <property type="evidence" value="ECO:0007669"/>
    <property type="project" value="TreeGrafter"/>
</dbReference>
<dbReference type="GO" id="GO:0005524">
    <property type="term" value="F:ATP binding"/>
    <property type="evidence" value="ECO:0007669"/>
    <property type="project" value="UniProtKB-UniRule"/>
</dbReference>
<dbReference type="GO" id="GO:0003723">
    <property type="term" value="F:RNA binding"/>
    <property type="evidence" value="ECO:0007669"/>
    <property type="project" value="UniProtKB-KW"/>
</dbReference>
<dbReference type="GO" id="GO:0004831">
    <property type="term" value="F:tyrosine-tRNA ligase activity"/>
    <property type="evidence" value="ECO:0007669"/>
    <property type="project" value="UniProtKB-UniRule"/>
</dbReference>
<dbReference type="GO" id="GO:0006437">
    <property type="term" value="P:tyrosyl-tRNA aminoacylation"/>
    <property type="evidence" value="ECO:0007669"/>
    <property type="project" value="UniProtKB-UniRule"/>
</dbReference>
<dbReference type="CDD" id="cd00165">
    <property type="entry name" value="S4"/>
    <property type="match status" value="1"/>
</dbReference>
<dbReference type="CDD" id="cd00395">
    <property type="entry name" value="Tyr_Trp_RS_core"/>
    <property type="match status" value="1"/>
</dbReference>
<dbReference type="FunFam" id="1.10.240.10:FF:000001">
    <property type="entry name" value="Tyrosine--tRNA ligase"/>
    <property type="match status" value="1"/>
</dbReference>
<dbReference type="FunFam" id="3.40.50.620:FF:000008">
    <property type="entry name" value="Tyrosine--tRNA ligase"/>
    <property type="match status" value="1"/>
</dbReference>
<dbReference type="Gene3D" id="3.40.50.620">
    <property type="entry name" value="HUPs"/>
    <property type="match status" value="1"/>
</dbReference>
<dbReference type="Gene3D" id="3.10.290.10">
    <property type="entry name" value="RNA-binding S4 domain"/>
    <property type="match status" value="1"/>
</dbReference>
<dbReference type="Gene3D" id="1.10.240.10">
    <property type="entry name" value="Tyrosyl-Transfer RNA Synthetase"/>
    <property type="match status" value="1"/>
</dbReference>
<dbReference type="HAMAP" id="MF_02006">
    <property type="entry name" value="Tyr_tRNA_synth_type1"/>
    <property type="match status" value="1"/>
</dbReference>
<dbReference type="InterPro" id="IPR001412">
    <property type="entry name" value="aa-tRNA-synth_I_CS"/>
</dbReference>
<dbReference type="InterPro" id="IPR002305">
    <property type="entry name" value="aa-tRNA-synth_Ic"/>
</dbReference>
<dbReference type="InterPro" id="IPR014729">
    <property type="entry name" value="Rossmann-like_a/b/a_fold"/>
</dbReference>
<dbReference type="InterPro" id="IPR002942">
    <property type="entry name" value="S4_RNA-bd"/>
</dbReference>
<dbReference type="InterPro" id="IPR036986">
    <property type="entry name" value="S4_RNA-bd_sf"/>
</dbReference>
<dbReference type="InterPro" id="IPR054608">
    <property type="entry name" value="SYY-like_C"/>
</dbReference>
<dbReference type="InterPro" id="IPR002307">
    <property type="entry name" value="Tyr-tRNA-ligase"/>
</dbReference>
<dbReference type="InterPro" id="IPR024088">
    <property type="entry name" value="Tyr-tRNA-ligase_bac-type"/>
</dbReference>
<dbReference type="InterPro" id="IPR024107">
    <property type="entry name" value="Tyr-tRNA-ligase_bac_1"/>
</dbReference>
<dbReference type="NCBIfam" id="TIGR00234">
    <property type="entry name" value="tyrS"/>
    <property type="match status" value="1"/>
</dbReference>
<dbReference type="PANTHER" id="PTHR11766:SF0">
    <property type="entry name" value="TYROSINE--TRNA LIGASE, MITOCHONDRIAL"/>
    <property type="match status" value="1"/>
</dbReference>
<dbReference type="PANTHER" id="PTHR11766">
    <property type="entry name" value="TYROSYL-TRNA SYNTHETASE"/>
    <property type="match status" value="1"/>
</dbReference>
<dbReference type="Pfam" id="PF22421">
    <property type="entry name" value="SYY_C-terminal"/>
    <property type="match status" value="1"/>
</dbReference>
<dbReference type="Pfam" id="PF00579">
    <property type="entry name" value="tRNA-synt_1b"/>
    <property type="match status" value="1"/>
</dbReference>
<dbReference type="PRINTS" id="PR01040">
    <property type="entry name" value="TRNASYNTHTYR"/>
</dbReference>
<dbReference type="SMART" id="SM00363">
    <property type="entry name" value="S4"/>
    <property type="match status" value="1"/>
</dbReference>
<dbReference type="SUPFAM" id="SSF55174">
    <property type="entry name" value="Alpha-L RNA-binding motif"/>
    <property type="match status" value="1"/>
</dbReference>
<dbReference type="SUPFAM" id="SSF52374">
    <property type="entry name" value="Nucleotidylyl transferase"/>
    <property type="match status" value="1"/>
</dbReference>
<dbReference type="PROSITE" id="PS00178">
    <property type="entry name" value="AA_TRNA_LIGASE_I"/>
    <property type="match status" value="1"/>
</dbReference>
<dbReference type="PROSITE" id="PS50889">
    <property type="entry name" value="S4"/>
    <property type="match status" value="1"/>
</dbReference>
<feature type="chain" id="PRO_0000234745" description="Tyrosine--tRNA ligase">
    <location>
        <begin position="1"/>
        <end position="428"/>
    </location>
</feature>
<feature type="domain" description="S4 RNA-binding" evidence="1">
    <location>
        <begin position="358"/>
        <end position="424"/>
    </location>
</feature>
<feature type="short sequence motif" description="'HIGH' region">
    <location>
        <begin position="39"/>
        <end position="48"/>
    </location>
</feature>
<feature type="short sequence motif" description="'KMSKS' region">
    <location>
        <begin position="236"/>
        <end position="240"/>
    </location>
</feature>
<feature type="binding site" evidence="1">
    <location>
        <position position="34"/>
    </location>
    <ligand>
        <name>L-tyrosine</name>
        <dbReference type="ChEBI" id="CHEBI:58315"/>
    </ligand>
</feature>
<feature type="binding site" evidence="1">
    <location>
        <position position="171"/>
    </location>
    <ligand>
        <name>L-tyrosine</name>
        <dbReference type="ChEBI" id="CHEBI:58315"/>
    </ligand>
</feature>
<feature type="binding site" evidence="1">
    <location>
        <position position="175"/>
    </location>
    <ligand>
        <name>L-tyrosine</name>
        <dbReference type="ChEBI" id="CHEBI:58315"/>
    </ligand>
</feature>
<feature type="binding site" evidence="1">
    <location>
        <position position="239"/>
    </location>
    <ligand>
        <name>ATP</name>
        <dbReference type="ChEBI" id="CHEBI:30616"/>
    </ligand>
</feature>